<evidence type="ECO:0000255" key="1">
    <source>
        <dbReference type="HAMAP-Rule" id="MF_00158"/>
    </source>
</evidence>
<organism>
    <name type="scientific">Tropheryma whipplei (strain TW08/27)</name>
    <name type="common">Whipple's bacillus</name>
    <dbReference type="NCBI Taxonomy" id="218496"/>
    <lineage>
        <taxon>Bacteria</taxon>
        <taxon>Bacillati</taxon>
        <taxon>Actinomycetota</taxon>
        <taxon>Actinomycetes</taxon>
        <taxon>Micrococcales</taxon>
        <taxon>Tropherymataceae</taxon>
        <taxon>Tropheryma</taxon>
    </lineage>
</organism>
<sequence>MNLKLASSPHELRTCLAGRAFVLVPTMGALHEGHIWLVDMARRCNLPVVVSIFVNPLQFDDSLDLDTYPRTLEQDLEKLEGKAFAVYSPSVETMYPNGLDSIRIDPGPIGRILEGAIRPGFFDGILTIVAKLLLQTAPERVFFSKKDAQQAFLVRRMVRELAFPVRVEVTGFLRDKFSLPYSSRNRKLGVDAREKAQRLSQGLLSVVNNGPLTVRDCIDKITDLANSIGVDLGYAQILDENFCEIASDRMVTRAFHSEACIGLNTPLFLLAARVHGVRVVDNVDLVVV</sequence>
<gene>
    <name evidence="1" type="primary">panC</name>
    <name type="ordered locus">TW073</name>
</gene>
<protein>
    <recommendedName>
        <fullName evidence="1">Pantothenate synthetase</fullName>
        <shortName evidence="1">PS</shortName>
        <ecNumber evidence="1">6.3.2.1</ecNumber>
    </recommendedName>
    <alternativeName>
        <fullName evidence="1">Pantoate--beta-alanine ligase</fullName>
    </alternativeName>
    <alternativeName>
        <fullName evidence="1">Pantoate-activating enzyme</fullName>
    </alternativeName>
</protein>
<proteinExistence type="inferred from homology"/>
<keyword id="KW-0067">ATP-binding</keyword>
<keyword id="KW-0963">Cytoplasm</keyword>
<keyword id="KW-0436">Ligase</keyword>
<keyword id="KW-0547">Nucleotide-binding</keyword>
<keyword id="KW-0566">Pantothenate biosynthesis</keyword>
<reference key="1">
    <citation type="journal article" date="2003" name="Lancet">
        <title>Sequencing and analysis of the genome of the Whipple's disease bacterium Tropheryma whipplei.</title>
        <authorList>
            <person name="Bentley S.D."/>
            <person name="Maiwald M."/>
            <person name="Murphy L.D."/>
            <person name="Pallen M.J."/>
            <person name="Yeats C.A."/>
            <person name="Dover L.G."/>
            <person name="Norbertczak H.T."/>
            <person name="Besra G.S."/>
            <person name="Quail M.A."/>
            <person name="Harris D.E."/>
            <person name="von Herbay A."/>
            <person name="Goble A."/>
            <person name="Rutter S."/>
            <person name="Squares R."/>
            <person name="Squares S."/>
            <person name="Barrell B.G."/>
            <person name="Parkhill J."/>
            <person name="Relman D.A."/>
        </authorList>
    </citation>
    <scope>NUCLEOTIDE SEQUENCE [LARGE SCALE GENOMIC DNA]</scope>
    <source>
        <strain>TW08/27</strain>
    </source>
</reference>
<accession>Q83ID9</accession>
<name>PANC_TROW8</name>
<comment type="function">
    <text evidence="1">Catalyzes the condensation of pantoate with beta-alanine in an ATP-dependent reaction via a pantoyl-adenylate intermediate.</text>
</comment>
<comment type="catalytic activity">
    <reaction evidence="1">
        <text>(R)-pantoate + beta-alanine + ATP = (R)-pantothenate + AMP + diphosphate + H(+)</text>
        <dbReference type="Rhea" id="RHEA:10912"/>
        <dbReference type="ChEBI" id="CHEBI:15378"/>
        <dbReference type="ChEBI" id="CHEBI:15980"/>
        <dbReference type="ChEBI" id="CHEBI:29032"/>
        <dbReference type="ChEBI" id="CHEBI:30616"/>
        <dbReference type="ChEBI" id="CHEBI:33019"/>
        <dbReference type="ChEBI" id="CHEBI:57966"/>
        <dbReference type="ChEBI" id="CHEBI:456215"/>
        <dbReference type="EC" id="6.3.2.1"/>
    </reaction>
</comment>
<comment type="pathway">
    <text evidence="1">Cofactor biosynthesis; (R)-pantothenate biosynthesis; (R)-pantothenate from (R)-pantoate and beta-alanine: step 1/1.</text>
</comment>
<comment type="subunit">
    <text evidence="1">Homodimer.</text>
</comment>
<comment type="subcellular location">
    <subcellularLocation>
        <location evidence="1">Cytoplasm</location>
    </subcellularLocation>
</comment>
<comment type="miscellaneous">
    <text evidence="1">The reaction proceeds by a bi uni uni bi ping pong mechanism.</text>
</comment>
<comment type="similarity">
    <text evidence="1">Belongs to the pantothenate synthetase family.</text>
</comment>
<dbReference type="EC" id="6.3.2.1" evidence="1"/>
<dbReference type="EMBL" id="BX251410">
    <property type="protein sequence ID" value="CAD66760.1"/>
    <property type="molecule type" value="Genomic_DNA"/>
</dbReference>
<dbReference type="RefSeq" id="WP_011096041.1">
    <property type="nucleotide sequence ID" value="NC_004551.1"/>
</dbReference>
<dbReference type="SMR" id="Q83ID9"/>
<dbReference type="GeneID" id="67387846"/>
<dbReference type="KEGG" id="tws:TW073"/>
<dbReference type="HOGENOM" id="CLU_047148_0_2_11"/>
<dbReference type="UniPathway" id="UPA00028">
    <property type="reaction ID" value="UER00005"/>
</dbReference>
<dbReference type="GO" id="GO:0005829">
    <property type="term" value="C:cytosol"/>
    <property type="evidence" value="ECO:0007669"/>
    <property type="project" value="TreeGrafter"/>
</dbReference>
<dbReference type="GO" id="GO:0005524">
    <property type="term" value="F:ATP binding"/>
    <property type="evidence" value="ECO:0007669"/>
    <property type="project" value="UniProtKB-KW"/>
</dbReference>
<dbReference type="GO" id="GO:0004592">
    <property type="term" value="F:pantoate-beta-alanine ligase activity"/>
    <property type="evidence" value="ECO:0007669"/>
    <property type="project" value="UniProtKB-UniRule"/>
</dbReference>
<dbReference type="GO" id="GO:0015940">
    <property type="term" value="P:pantothenate biosynthetic process"/>
    <property type="evidence" value="ECO:0007669"/>
    <property type="project" value="UniProtKB-UniRule"/>
</dbReference>
<dbReference type="CDD" id="cd00560">
    <property type="entry name" value="PanC"/>
    <property type="match status" value="1"/>
</dbReference>
<dbReference type="Gene3D" id="3.40.50.620">
    <property type="entry name" value="HUPs"/>
    <property type="match status" value="1"/>
</dbReference>
<dbReference type="Gene3D" id="3.30.1300.10">
    <property type="entry name" value="Pantoate-beta-alanine ligase, C-terminal domain"/>
    <property type="match status" value="1"/>
</dbReference>
<dbReference type="HAMAP" id="MF_00158">
    <property type="entry name" value="PanC"/>
    <property type="match status" value="1"/>
</dbReference>
<dbReference type="InterPro" id="IPR003721">
    <property type="entry name" value="Pantoate_ligase"/>
</dbReference>
<dbReference type="InterPro" id="IPR042176">
    <property type="entry name" value="Pantoate_ligase_C"/>
</dbReference>
<dbReference type="InterPro" id="IPR014729">
    <property type="entry name" value="Rossmann-like_a/b/a_fold"/>
</dbReference>
<dbReference type="PANTHER" id="PTHR21299">
    <property type="entry name" value="CYTIDYLATE KINASE/PANTOATE-BETA-ALANINE LIGASE"/>
    <property type="match status" value="1"/>
</dbReference>
<dbReference type="PANTHER" id="PTHR21299:SF1">
    <property type="entry name" value="PANTOATE--BETA-ALANINE LIGASE"/>
    <property type="match status" value="1"/>
</dbReference>
<dbReference type="Pfam" id="PF02569">
    <property type="entry name" value="Pantoate_ligase"/>
    <property type="match status" value="1"/>
</dbReference>
<dbReference type="SUPFAM" id="SSF52374">
    <property type="entry name" value="Nucleotidylyl transferase"/>
    <property type="match status" value="1"/>
</dbReference>
<feature type="chain" id="PRO_0000305571" description="Pantothenate synthetase">
    <location>
        <begin position="1"/>
        <end position="288"/>
    </location>
</feature>
<feature type="active site" description="Proton donor" evidence="1">
    <location>
        <position position="34"/>
    </location>
</feature>
<feature type="binding site" evidence="1">
    <location>
        <begin position="27"/>
        <end position="34"/>
    </location>
    <ligand>
        <name>ATP</name>
        <dbReference type="ChEBI" id="CHEBI:30616"/>
    </ligand>
</feature>
<feature type="binding site" evidence="1">
    <location>
        <position position="58"/>
    </location>
    <ligand>
        <name>(R)-pantoate</name>
        <dbReference type="ChEBI" id="CHEBI:15980"/>
    </ligand>
</feature>
<feature type="binding site" evidence="1">
    <location>
        <position position="58"/>
    </location>
    <ligand>
        <name>beta-alanine</name>
        <dbReference type="ChEBI" id="CHEBI:57966"/>
    </ligand>
</feature>
<feature type="binding site" evidence="1">
    <location>
        <position position="150"/>
    </location>
    <ligand>
        <name>(R)-pantoate</name>
        <dbReference type="ChEBI" id="CHEBI:15980"/>
    </ligand>
</feature>
<feature type="binding site" evidence="1">
    <location>
        <position position="173"/>
    </location>
    <ligand>
        <name>ATP</name>
        <dbReference type="ChEBI" id="CHEBI:30616"/>
    </ligand>
</feature>
<feature type="binding site" evidence="1">
    <location>
        <begin position="181"/>
        <end position="184"/>
    </location>
    <ligand>
        <name>ATP</name>
        <dbReference type="ChEBI" id="CHEBI:30616"/>
    </ligand>
</feature>